<keyword id="KW-0067">ATP-binding</keyword>
<keyword id="KW-0963">Cytoplasm</keyword>
<keyword id="KW-0227">DNA damage</keyword>
<keyword id="KW-0233">DNA recombination</keyword>
<keyword id="KW-0234">DNA repair</keyword>
<keyword id="KW-0238">DNA-binding</keyword>
<keyword id="KW-0378">Hydrolase</keyword>
<keyword id="KW-0547">Nucleotide-binding</keyword>
<evidence type="ECO:0000255" key="1">
    <source>
        <dbReference type="HAMAP-Rule" id="MF_00016"/>
    </source>
</evidence>
<name>RUVB_CALBD</name>
<protein>
    <recommendedName>
        <fullName evidence="1">Holliday junction branch migration complex subunit RuvB</fullName>
        <ecNumber evidence="1">3.6.4.-</ecNumber>
    </recommendedName>
</protein>
<proteinExistence type="inferred from homology"/>
<dbReference type="EC" id="3.6.4.-" evidence="1"/>
<dbReference type="EMBL" id="CP001393">
    <property type="protein sequence ID" value="ACM60217.1"/>
    <property type="molecule type" value="Genomic_DNA"/>
</dbReference>
<dbReference type="RefSeq" id="WP_015907620.1">
    <property type="nucleotide sequence ID" value="NC_012034.1"/>
</dbReference>
<dbReference type="SMR" id="B9MRB3"/>
<dbReference type="STRING" id="521460.Athe_1116"/>
<dbReference type="GeneID" id="31772466"/>
<dbReference type="KEGG" id="ate:Athe_1116"/>
<dbReference type="eggNOG" id="COG2255">
    <property type="taxonomic scope" value="Bacteria"/>
</dbReference>
<dbReference type="HOGENOM" id="CLU_055599_1_0_9"/>
<dbReference type="Proteomes" id="UP000007723">
    <property type="component" value="Chromosome"/>
</dbReference>
<dbReference type="GO" id="GO:0005737">
    <property type="term" value="C:cytoplasm"/>
    <property type="evidence" value="ECO:0007669"/>
    <property type="project" value="UniProtKB-SubCell"/>
</dbReference>
<dbReference type="GO" id="GO:0048476">
    <property type="term" value="C:Holliday junction resolvase complex"/>
    <property type="evidence" value="ECO:0007669"/>
    <property type="project" value="UniProtKB-UniRule"/>
</dbReference>
<dbReference type="GO" id="GO:0005524">
    <property type="term" value="F:ATP binding"/>
    <property type="evidence" value="ECO:0007669"/>
    <property type="project" value="UniProtKB-UniRule"/>
</dbReference>
<dbReference type="GO" id="GO:0016887">
    <property type="term" value="F:ATP hydrolysis activity"/>
    <property type="evidence" value="ECO:0007669"/>
    <property type="project" value="InterPro"/>
</dbReference>
<dbReference type="GO" id="GO:0000400">
    <property type="term" value="F:four-way junction DNA binding"/>
    <property type="evidence" value="ECO:0007669"/>
    <property type="project" value="UniProtKB-UniRule"/>
</dbReference>
<dbReference type="GO" id="GO:0009378">
    <property type="term" value="F:four-way junction helicase activity"/>
    <property type="evidence" value="ECO:0007669"/>
    <property type="project" value="InterPro"/>
</dbReference>
<dbReference type="GO" id="GO:0006310">
    <property type="term" value="P:DNA recombination"/>
    <property type="evidence" value="ECO:0007669"/>
    <property type="project" value="UniProtKB-UniRule"/>
</dbReference>
<dbReference type="GO" id="GO:0006281">
    <property type="term" value="P:DNA repair"/>
    <property type="evidence" value="ECO:0007669"/>
    <property type="project" value="UniProtKB-UniRule"/>
</dbReference>
<dbReference type="CDD" id="cd00009">
    <property type="entry name" value="AAA"/>
    <property type="match status" value="1"/>
</dbReference>
<dbReference type="Gene3D" id="1.10.8.60">
    <property type="match status" value="1"/>
</dbReference>
<dbReference type="Gene3D" id="3.40.50.300">
    <property type="entry name" value="P-loop containing nucleotide triphosphate hydrolases"/>
    <property type="match status" value="1"/>
</dbReference>
<dbReference type="Gene3D" id="1.10.10.10">
    <property type="entry name" value="Winged helix-like DNA-binding domain superfamily/Winged helix DNA-binding domain"/>
    <property type="match status" value="1"/>
</dbReference>
<dbReference type="HAMAP" id="MF_00016">
    <property type="entry name" value="DNA_HJ_migration_RuvB"/>
    <property type="match status" value="1"/>
</dbReference>
<dbReference type="InterPro" id="IPR003593">
    <property type="entry name" value="AAA+_ATPase"/>
</dbReference>
<dbReference type="InterPro" id="IPR041445">
    <property type="entry name" value="AAA_lid_4"/>
</dbReference>
<dbReference type="InterPro" id="IPR004605">
    <property type="entry name" value="DNA_helicase_Holl-junc_RuvB"/>
</dbReference>
<dbReference type="InterPro" id="IPR027417">
    <property type="entry name" value="P-loop_NTPase"/>
</dbReference>
<dbReference type="InterPro" id="IPR008824">
    <property type="entry name" value="RuvB-like_N"/>
</dbReference>
<dbReference type="InterPro" id="IPR008823">
    <property type="entry name" value="RuvB_C"/>
</dbReference>
<dbReference type="InterPro" id="IPR036388">
    <property type="entry name" value="WH-like_DNA-bd_sf"/>
</dbReference>
<dbReference type="InterPro" id="IPR036390">
    <property type="entry name" value="WH_DNA-bd_sf"/>
</dbReference>
<dbReference type="NCBIfam" id="NF000868">
    <property type="entry name" value="PRK00080.1"/>
    <property type="match status" value="1"/>
</dbReference>
<dbReference type="NCBIfam" id="TIGR00635">
    <property type="entry name" value="ruvB"/>
    <property type="match status" value="1"/>
</dbReference>
<dbReference type="PANTHER" id="PTHR42848">
    <property type="match status" value="1"/>
</dbReference>
<dbReference type="PANTHER" id="PTHR42848:SF1">
    <property type="entry name" value="HOLLIDAY JUNCTION BRANCH MIGRATION COMPLEX SUBUNIT RUVB"/>
    <property type="match status" value="1"/>
</dbReference>
<dbReference type="Pfam" id="PF17864">
    <property type="entry name" value="AAA_lid_4"/>
    <property type="match status" value="1"/>
</dbReference>
<dbReference type="Pfam" id="PF05491">
    <property type="entry name" value="RuvB_C"/>
    <property type="match status" value="1"/>
</dbReference>
<dbReference type="Pfam" id="PF05496">
    <property type="entry name" value="RuvB_N"/>
    <property type="match status" value="1"/>
</dbReference>
<dbReference type="SMART" id="SM00382">
    <property type="entry name" value="AAA"/>
    <property type="match status" value="1"/>
</dbReference>
<dbReference type="SUPFAM" id="SSF52540">
    <property type="entry name" value="P-loop containing nucleoside triphosphate hydrolases"/>
    <property type="match status" value="1"/>
</dbReference>
<dbReference type="SUPFAM" id="SSF46785">
    <property type="entry name" value="Winged helix' DNA-binding domain"/>
    <property type="match status" value="1"/>
</dbReference>
<comment type="function">
    <text evidence="1">The RuvA-RuvB-RuvC complex processes Holliday junction (HJ) DNA during genetic recombination and DNA repair, while the RuvA-RuvB complex plays an important role in the rescue of blocked DNA replication forks via replication fork reversal (RFR). RuvA specifically binds to HJ cruciform DNA, conferring on it an open structure. The RuvB hexamer acts as an ATP-dependent pump, pulling dsDNA into and through the RuvAB complex. RuvB forms 2 homohexamers on either side of HJ DNA bound by 1 or 2 RuvA tetramers; 4 subunits per hexamer contact DNA at a time. Coordinated motions by a converter formed by DNA-disengaged RuvB subunits stimulates ATP hydrolysis and nucleotide exchange. Immobilization of the converter enables RuvB to convert the ATP-contained energy into a lever motion, pulling 2 nucleotides of DNA out of the RuvA tetramer per ATP hydrolyzed, thus driving DNA branch migration. The RuvB motors rotate together with the DNA substrate, which together with the progressing nucleotide cycle form the mechanistic basis for DNA recombination by continuous HJ branch migration. Branch migration allows RuvC to scan DNA until it finds its consensus sequence, where it cleaves and resolves cruciform DNA.</text>
</comment>
<comment type="catalytic activity">
    <reaction evidence="1">
        <text>ATP + H2O = ADP + phosphate + H(+)</text>
        <dbReference type="Rhea" id="RHEA:13065"/>
        <dbReference type="ChEBI" id="CHEBI:15377"/>
        <dbReference type="ChEBI" id="CHEBI:15378"/>
        <dbReference type="ChEBI" id="CHEBI:30616"/>
        <dbReference type="ChEBI" id="CHEBI:43474"/>
        <dbReference type="ChEBI" id="CHEBI:456216"/>
    </reaction>
</comment>
<comment type="subunit">
    <text evidence="1">Homohexamer. Forms an RuvA(8)-RuvB(12)-Holliday junction (HJ) complex. HJ DNA is sandwiched between 2 RuvA tetramers; dsDNA enters through RuvA and exits via RuvB. An RuvB hexamer assembles on each DNA strand where it exits the tetramer. Each RuvB hexamer is contacted by two RuvA subunits (via domain III) on 2 adjacent RuvB subunits; this complex drives branch migration. In the full resolvosome a probable DNA-RuvA(4)-RuvB(12)-RuvC(2) complex forms which resolves the HJ.</text>
</comment>
<comment type="subcellular location">
    <subcellularLocation>
        <location evidence="1">Cytoplasm</location>
    </subcellularLocation>
</comment>
<comment type="domain">
    <text evidence="1">Has 3 domains, the large (RuvB-L) and small ATPase (RuvB-S) domains and the C-terminal head (RuvB-H) domain. The head domain binds DNA, while the ATPase domains jointly bind ATP, ADP or are empty depending on the state of the subunit in the translocation cycle. During a single DNA translocation step the structure of each domain remains the same, but their relative positions change.</text>
</comment>
<comment type="similarity">
    <text evidence="1">Belongs to the RuvB family.</text>
</comment>
<organism>
    <name type="scientific">Caldicellulosiruptor bescii (strain ATCC BAA-1888 / DSM 6725 / KCTC 15123 / Z-1320)</name>
    <name type="common">Anaerocellum thermophilum</name>
    <dbReference type="NCBI Taxonomy" id="521460"/>
    <lineage>
        <taxon>Bacteria</taxon>
        <taxon>Bacillati</taxon>
        <taxon>Bacillota</taxon>
        <taxon>Bacillota incertae sedis</taxon>
        <taxon>Caldicellulosiruptorales</taxon>
        <taxon>Caldicellulosiruptoraceae</taxon>
        <taxon>Caldicellulosiruptor</taxon>
    </lineage>
</organism>
<feature type="chain" id="PRO_1000195192" description="Holliday junction branch migration complex subunit RuvB">
    <location>
        <begin position="1"/>
        <end position="338"/>
    </location>
</feature>
<feature type="region of interest" description="Large ATPase domain (RuvB-L)" evidence="1">
    <location>
        <begin position="1"/>
        <end position="180"/>
    </location>
</feature>
<feature type="region of interest" description="Small ATPAse domain (RuvB-S)" evidence="1">
    <location>
        <begin position="181"/>
        <end position="251"/>
    </location>
</feature>
<feature type="region of interest" description="Head domain (RuvB-H)" evidence="1">
    <location>
        <begin position="254"/>
        <end position="338"/>
    </location>
</feature>
<feature type="binding site" evidence="1">
    <location>
        <position position="19"/>
    </location>
    <ligand>
        <name>ATP</name>
        <dbReference type="ChEBI" id="CHEBI:30616"/>
    </ligand>
</feature>
<feature type="binding site" evidence="1">
    <location>
        <position position="20"/>
    </location>
    <ligand>
        <name>ATP</name>
        <dbReference type="ChEBI" id="CHEBI:30616"/>
    </ligand>
</feature>
<feature type="binding site" evidence="1">
    <location>
        <position position="61"/>
    </location>
    <ligand>
        <name>ATP</name>
        <dbReference type="ChEBI" id="CHEBI:30616"/>
    </ligand>
</feature>
<feature type="binding site" evidence="1">
    <location>
        <position position="64"/>
    </location>
    <ligand>
        <name>ATP</name>
        <dbReference type="ChEBI" id="CHEBI:30616"/>
    </ligand>
</feature>
<feature type="binding site" evidence="1">
    <location>
        <position position="65"/>
    </location>
    <ligand>
        <name>ATP</name>
        <dbReference type="ChEBI" id="CHEBI:30616"/>
    </ligand>
</feature>
<feature type="binding site" evidence="1">
    <location>
        <position position="65"/>
    </location>
    <ligand>
        <name>Mg(2+)</name>
        <dbReference type="ChEBI" id="CHEBI:18420"/>
    </ligand>
</feature>
<feature type="binding site" evidence="1">
    <location>
        <position position="66"/>
    </location>
    <ligand>
        <name>ATP</name>
        <dbReference type="ChEBI" id="CHEBI:30616"/>
    </ligand>
</feature>
<feature type="binding site" evidence="1">
    <location>
        <position position="170"/>
    </location>
    <ligand>
        <name>ATP</name>
        <dbReference type="ChEBI" id="CHEBI:30616"/>
    </ligand>
</feature>
<feature type="binding site" evidence="1">
    <location>
        <position position="180"/>
    </location>
    <ligand>
        <name>ATP</name>
        <dbReference type="ChEBI" id="CHEBI:30616"/>
    </ligand>
</feature>
<feature type="binding site" evidence="1">
    <location>
        <position position="217"/>
    </location>
    <ligand>
        <name>ATP</name>
        <dbReference type="ChEBI" id="CHEBI:30616"/>
    </ligand>
</feature>
<feature type="binding site" evidence="1">
    <location>
        <position position="309"/>
    </location>
    <ligand>
        <name>DNA</name>
        <dbReference type="ChEBI" id="CHEBI:16991"/>
    </ligand>
</feature>
<feature type="binding site" evidence="1">
    <location>
        <position position="314"/>
    </location>
    <ligand>
        <name>DNA</name>
        <dbReference type="ChEBI" id="CHEBI:16991"/>
    </ligand>
</feature>
<reference key="1">
    <citation type="submission" date="2009-01" db="EMBL/GenBank/DDBJ databases">
        <title>Complete sequence of chromosome of Caldicellulosiruptor becscii DSM 6725.</title>
        <authorList>
            <person name="Lucas S."/>
            <person name="Copeland A."/>
            <person name="Lapidus A."/>
            <person name="Glavina del Rio T."/>
            <person name="Tice H."/>
            <person name="Bruce D."/>
            <person name="Goodwin L."/>
            <person name="Pitluck S."/>
            <person name="Sims D."/>
            <person name="Meincke L."/>
            <person name="Brettin T."/>
            <person name="Detter J.C."/>
            <person name="Han C."/>
            <person name="Larimer F."/>
            <person name="Land M."/>
            <person name="Hauser L."/>
            <person name="Kyrpides N."/>
            <person name="Ovchinnikova G."/>
            <person name="Kataeva I."/>
            <person name="Adams M.W.W."/>
        </authorList>
    </citation>
    <scope>NUCLEOTIDE SEQUENCE [LARGE SCALE GENOMIC DNA]</scope>
    <source>
        <strain>ATCC BAA-1888 / DSM 6725 / KCTC 15123 / Z-1320</strain>
    </source>
</reference>
<gene>
    <name evidence="1" type="primary">ruvB</name>
    <name type="ordered locus">Athe_1116</name>
</gene>
<sequence>MERLLDNKFSIEDVHEESLRPKTLEEYIGQQKVKEKIKIFIEAAKKRKEPLDHVLLYGPPGLGKTTLANIIANEMGVDIKITSGPAIERAGDLVAILTNIGENNILFIDEIHRLNRTIEEVLYPAMEDKKVDIVIGKGPSAKTIRLTLPPFTLIGATTRAGLLSSPLRDRFGIIERLDYYTVEELSQIVMRSASILKCDIEKEACIEIAKRSRGTPRVANRLLRRLRDYAMVKHTGSITYEVAKSGLEMFEVDEYGLDLVDRNILEAIVYKFGGGPVGLSTIAAAISEDEGTIEDIYEPYLIQEGFLVKTARGRVATQKAISHIAKIKFKLKESGDNR</sequence>
<accession>B9MRB3</accession>